<sequence>MSIVFQFFLIALVLFSLLMVIGVPVAYASPQNWDQSKPLLYVGSAIWAILVVAVAILNFLVI</sequence>
<accession>B0JLL9</accession>
<gene>
    <name evidence="1" type="primary">psbZ</name>
    <name type="ordered locus">MAE_32210</name>
</gene>
<comment type="function">
    <text evidence="1">May control the interaction of photosystem II (PSII) cores with the light-harvesting antenna, regulates electron flow through the 2 photosystem reaction centers. PSII is a light-driven water plastoquinone oxidoreductase, using light energy to abstract electrons from H(2)O, generating a proton gradient subsequently used for ATP formation.</text>
</comment>
<comment type="subunit">
    <text evidence="1">PSII is composed of 1 copy each of membrane proteins PsbA, PsbB, PsbC, PsbD, PsbE, PsbF, PsbH, PsbI, PsbJ, PsbK, PsbL, PsbM, PsbT, PsbX, PsbY, PsbZ, Psb30/Ycf12, peripheral proteins PsbO, CyanoQ (PsbQ), PsbU, PsbV and a large number of cofactors. It forms dimeric complexes.</text>
</comment>
<comment type="subcellular location">
    <subcellularLocation>
        <location evidence="1">Cellular thylakoid membrane</location>
        <topology evidence="1">Multi-pass membrane protein</topology>
    </subcellularLocation>
</comment>
<comment type="similarity">
    <text evidence="1">Belongs to the PsbZ family.</text>
</comment>
<keyword id="KW-0472">Membrane</keyword>
<keyword id="KW-0602">Photosynthesis</keyword>
<keyword id="KW-0604">Photosystem II</keyword>
<keyword id="KW-0674">Reaction center</keyword>
<keyword id="KW-0793">Thylakoid</keyword>
<keyword id="KW-0812">Transmembrane</keyword>
<keyword id="KW-1133">Transmembrane helix</keyword>
<evidence type="ECO:0000255" key="1">
    <source>
        <dbReference type="HAMAP-Rule" id="MF_00644"/>
    </source>
</evidence>
<reference key="1">
    <citation type="journal article" date="2007" name="DNA Res.">
        <title>Complete genomic structure of the bloom-forming toxic cyanobacterium Microcystis aeruginosa NIES-843.</title>
        <authorList>
            <person name="Kaneko T."/>
            <person name="Nakajima N."/>
            <person name="Okamoto S."/>
            <person name="Suzuki I."/>
            <person name="Tanabe Y."/>
            <person name="Tamaoki M."/>
            <person name="Nakamura Y."/>
            <person name="Kasai F."/>
            <person name="Watanabe A."/>
            <person name="Kawashima K."/>
            <person name="Kishida Y."/>
            <person name="Ono A."/>
            <person name="Shimizu Y."/>
            <person name="Takahashi C."/>
            <person name="Minami C."/>
            <person name="Fujishiro T."/>
            <person name="Kohara M."/>
            <person name="Katoh M."/>
            <person name="Nakazaki N."/>
            <person name="Nakayama S."/>
            <person name="Yamada M."/>
            <person name="Tabata S."/>
            <person name="Watanabe M.M."/>
        </authorList>
    </citation>
    <scope>NUCLEOTIDE SEQUENCE [LARGE SCALE GENOMIC DNA]</scope>
    <source>
        <strain>NIES-843 / IAM M-247</strain>
    </source>
</reference>
<feature type="chain" id="PRO_1000082703" description="Photosystem II reaction center protein Z">
    <location>
        <begin position="1"/>
        <end position="62"/>
    </location>
</feature>
<feature type="transmembrane region" description="Helical" evidence="1">
    <location>
        <begin position="8"/>
        <end position="28"/>
    </location>
</feature>
<feature type="transmembrane region" description="Helical" evidence="1">
    <location>
        <begin position="41"/>
        <end position="61"/>
    </location>
</feature>
<dbReference type="EMBL" id="AP009552">
    <property type="protein sequence ID" value="BAG03043.1"/>
    <property type="molecule type" value="Genomic_DNA"/>
</dbReference>
<dbReference type="RefSeq" id="WP_002732865.1">
    <property type="nucleotide sequence ID" value="NC_010296.1"/>
</dbReference>
<dbReference type="SMR" id="B0JLL9"/>
<dbReference type="STRING" id="449447.MAE_32210"/>
<dbReference type="PaxDb" id="449447-MAE_32210"/>
<dbReference type="EnsemblBacteria" id="BAG03043">
    <property type="protein sequence ID" value="BAG03043"/>
    <property type="gene ID" value="MAE_32210"/>
</dbReference>
<dbReference type="GeneID" id="66707432"/>
<dbReference type="KEGG" id="mar:MAE_32210"/>
<dbReference type="eggNOG" id="ENOG5032ZB0">
    <property type="taxonomic scope" value="Bacteria"/>
</dbReference>
<dbReference type="HOGENOM" id="CLU_195286_1_0_3"/>
<dbReference type="BioCyc" id="MAER449447:MAE_RS13940-MONOMER"/>
<dbReference type="Proteomes" id="UP000001510">
    <property type="component" value="Chromosome"/>
</dbReference>
<dbReference type="GO" id="GO:0009539">
    <property type="term" value="C:photosystem II reaction center"/>
    <property type="evidence" value="ECO:0007669"/>
    <property type="project" value="InterPro"/>
</dbReference>
<dbReference type="GO" id="GO:0031676">
    <property type="term" value="C:plasma membrane-derived thylakoid membrane"/>
    <property type="evidence" value="ECO:0007669"/>
    <property type="project" value="UniProtKB-SubCell"/>
</dbReference>
<dbReference type="GO" id="GO:0015979">
    <property type="term" value="P:photosynthesis"/>
    <property type="evidence" value="ECO:0007669"/>
    <property type="project" value="UniProtKB-UniRule"/>
</dbReference>
<dbReference type="GO" id="GO:0042549">
    <property type="term" value="P:photosystem II stabilization"/>
    <property type="evidence" value="ECO:0007669"/>
    <property type="project" value="InterPro"/>
</dbReference>
<dbReference type="Gene3D" id="1.10.287.740">
    <property type="entry name" value="Photosystem II PsbZ, reaction centre"/>
    <property type="match status" value="1"/>
</dbReference>
<dbReference type="HAMAP" id="MF_00644">
    <property type="entry name" value="PSII_PsbZ"/>
    <property type="match status" value="1"/>
</dbReference>
<dbReference type="InterPro" id="IPR002644">
    <property type="entry name" value="PSII_PsbZ"/>
</dbReference>
<dbReference type="InterPro" id="IPR036512">
    <property type="entry name" value="PSII_PsbZ_sf"/>
</dbReference>
<dbReference type="NCBIfam" id="TIGR03043">
    <property type="entry name" value="PS_II_psbZ"/>
    <property type="match status" value="1"/>
</dbReference>
<dbReference type="PANTHER" id="PTHR34971">
    <property type="entry name" value="PHOTOSYSTEM II REACTION CENTER PROTEIN Z"/>
    <property type="match status" value="1"/>
</dbReference>
<dbReference type="PANTHER" id="PTHR34971:SF2">
    <property type="entry name" value="PHOTOSYSTEM II REACTION CENTER PROTEIN Z"/>
    <property type="match status" value="1"/>
</dbReference>
<dbReference type="Pfam" id="PF01737">
    <property type="entry name" value="Ycf9"/>
    <property type="match status" value="1"/>
</dbReference>
<dbReference type="SUPFAM" id="SSF161055">
    <property type="entry name" value="PsbZ-like"/>
    <property type="match status" value="1"/>
</dbReference>
<protein>
    <recommendedName>
        <fullName evidence="1">Photosystem II reaction center protein Z</fullName>
        <shortName evidence="1">PSII-Z</shortName>
    </recommendedName>
</protein>
<organism>
    <name type="scientific">Microcystis aeruginosa (strain NIES-843 / IAM M-2473)</name>
    <dbReference type="NCBI Taxonomy" id="449447"/>
    <lineage>
        <taxon>Bacteria</taxon>
        <taxon>Bacillati</taxon>
        <taxon>Cyanobacteriota</taxon>
        <taxon>Cyanophyceae</taxon>
        <taxon>Oscillatoriophycideae</taxon>
        <taxon>Chroococcales</taxon>
        <taxon>Microcystaceae</taxon>
        <taxon>Microcystis</taxon>
    </lineage>
</organism>
<name>PSBZ_MICAN</name>
<proteinExistence type="inferred from homology"/>